<organism>
    <name type="scientific">Vibrio campbellii (strain ATCC BAA-1116)</name>
    <dbReference type="NCBI Taxonomy" id="2902295"/>
    <lineage>
        <taxon>Bacteria</taxon>
        <taxon>Pseudomonadati</taxon>
        <taxon>Pseudomonadota</taxon>
        <taxon>Gammaproteobacteria</taxon>
        <taxon>Vibrionales</taxon>
        <taxon>Vibrionaceae</taxon>
        <taxon>Vibrio</taxon>
    </lineage>
</organism>
<name>E4PD_VIBC1</name>
<reference key="1">
    <citation type="submission" date="2007-08" db="EMBL/GenBank/DDBJ databases">
        <authorList>
            <consortium name="The Vibrio harveyi Genome Sequencing Project"/>
            <person name="Bassler B."/>
            <person name="Clifton S.W."/>
            <person name="Fulton L."/>
            <person name="Delehaunty K."/>
            <person name="Fronick C."/>
            <person name="Harrison M."/>
            <person name="Markivic C."/>
            <person name="Fulton R."/>
            <person name="Tin-Wollam A.-M."/>
            <person name="Shah N."/>
            <person name="Pepin K."/>
            <person name="Nash W."/>
            <person name="Thiruvilangam P."/>
            <person name="Bhonagiri V."/>
            <person name="Waters C."/>
            <person name="Tu K.C."/>
            <person name="Irgon J."/>
            <person name="Wilson R.K."/>
        </authorList>
    </citation>
    <scope>NUCLEOTIDE SEQUENCE [LARGE SCALE GENOMIC DNA]</scope>
    <source>
        <strain>ATCC BAA-1116 / BB120</strain>
    </source>
</reference>
<accession>A7MTQ2</accession>
<gene>
    <name evidence="1" type="primary">epd</name>
    <name type="ordered locus">VIBHAR_03566</name>
</gene>
<keyword id="KW-0963">Cytoplasm</keyword>
<keyword id="KW-0520">NAD</keyword>
<keyword id="KW-0560">Oxidoreductase</keyword>
<keyword id="KW-0664">Pyridoxine biosynthesis</keyword>
<comment type="function">
    <text evidence="1">Catalyzes the NAD-dependent conversion of D-erythrose 4-phosphate to 4-phosphoerythronate.</text>
</comment>
<comment type="catalytic activity">
    <reaction evidence="1">
        <text>D-erythrose 4-phosphate + NAD(+) + H2O = 4-phospho-D-erythronate + NADH + 2 H(+)</text>
        <dbReference type="Rhea" id="RHEA:12056"/>
        <dbReference type="ChEBI" id="CHEBI:15377"/>
        <dbReference type="ChEBI" id="CHEBI:15378"/>
        <dbReference type="ChEBI" id="CHEBI:16897"/>
        <dbReference type="ChEBI" id="CHEBI:57540"/>
        <dbReference type="ChEBI" id="CHEBI:57945"/>
        <dbReference type="ChEBI" id="CHEBI:58766"/>
        <dbReference type="EC" id="1.2.1.72"/>
    </reaction>
</comment>
<comment type="pathway">
    <text evidence="1">Cofactor biosynthesis; pyridoxine 5'-phosphate biosynthesis; pyridoxine 5'-phosphate from D-erythrose 4-phosphate: step 1/5.</text>
</comment>
<comment type="subunit">
    <text evidence="1">Homotetramer.</text>
</comment>
<comment type="subcellular location">
    <subcellularLocation>
        <location evidence="1">Cytoplasm</location>
    </subcellularLocation>
</comment>
<comment type="similarity">
    <text evidence="1">Belongs to the glyceraldehyde-3-phosphate dehydrogenase family. Epd subfamily.</text>
</comment>
<protein>
    <recommendedName>
        <fullName evidence="1">D-erythrose-4-phosphate dehydrogenase</fullName>
        <shortName evidence="1">E4PDH</shortName>
        <ecNumber evidence="1">1.2.1.72</ecNumber>
    </recommendedName>
</protein>
<sequence>MLKVAINGFGRIGRNVLRAVYESGKHQQIKVVAVNELAQPEAMAHLLQYDTSHGRFGKKISHDQEHLYVHHDSSEYDPIRILHLAEIELLPWRDLEVDIVLDCTGVFGSQADGQAHIEAGAQKVLFSHPGASDLDNTIIYGVNHETLKDEHRVVSNGSCTTNCIVPIIKVLDEAFGIESGTITTIHSSMNDQQVIDAYHNDLRRTRAASQSIIPVDTKLHKGIERIFPKFSNKFEAISVRVPTVNVTAMDLSVTISTNVKVNDVNQTIVNASQCTLRDIVDYTESPLVSIDFNHDPHSAIVDGTQTRVSNGQLVKMLVWCDNEWGFANRMLDTALAMQASSQVEQ</sequence>
<evidence type="ECO:0000255" key="1">
    <source>
        <dbReference type="HAMAP-Rule" id="MF_01640"/>
    </source>
</evidence>
<feature type="chain" id="PRO_1000069898" description="D-erythrose-4-phosphate dehydrogenase">
    <location>
        <begin position="1"/>
        <end position="345"/>
    </location>
</feature>
<feature type="active site" description="Nucleophile" evidence="1">
    <location>
        <position position="159"/>
    </location>
</feature>
<feature type="binding site" evidence="1">
    <location>
        <begin position="11"/>
        <end position="12"/>
    </location>
    <ligand>
        <name>NAD(+)</name>
        <dbReference type="ChEBI" id="CHEBI:57540"/>
    </ligand>
</feature>
<feature type="binding site" evidence="1">
    <location>
        <begin position="158"/>
        <end position="160"/>
    </location>
    <ligand>
        <name>substrate</name>
    </ligand>
</feature>
<feature type="binding site" evidence="1">
    <location>
        <position position="204"/>
    </location>
    <ligand>
        <name>substrate</name>
    </ligand>
</feature>
<feature type="binding site" evidence="1">
    <location>
        <begin position="217"/>
        <end position="218"/>
    </location>
    <ligand>
        <name>substrate</name>
    </ligand>
</feature>
<feature type="binding site" evidence="1">
    <location>
        <position position="240"/>
    </location>
    <ligand>
        <name>substrate</name>
    </ligand>
</feature>
<feature type="binding site" evidence="1">
    <location>
        <position position="322"/>
    </location>
    <ligand>
        <name>NAD(+)</name>
        <dbReference type="ChEBI" id="CHEBI:57540"/>
    </ligand>
</feature>
<feature type="site" description="Activates thiol group during catalysis" evidence="1">
    <location>
        <position position="186"/>
    </location>
</feature>
<proteinExistence type="inferred from homology"/>
<dbReference type="EC" id="1.2.1.72" evidence="1"/>
<dbReference type="EMBL" id="CP000789">
    <property type="protein sequence ID" value="ABU72501.1"/>
    <property type="molecule type" value="Genomic_DNA"/>
</dbReference>
<dbReference type="RefSeq" id="WP_005531601.1">
    <property type="nucleotide sequence ID" value="NC_022269.1"/>
</dbReference>
<dbReference type="SMR" id="A7MTQ2"/>
<dbReference type="KEGG" id="vha:VIBHAR_03566"/>
<dbReference type="PATRIC" id="fig|338187.25.peg.2645"/>
<dbReference type="UniPathway" id="UPA00244">
    <property type="reaction ID" value="UER00309"/>
</dbReference>
<dbReference type="Proteomes" id="UP000008152">
    <property type="component" value="Chromosome I"/>
</dbReference>
<dbReference type="GO" id="GO:0005737">
    <property type="term" value="C:cytoplasm"/>
    <property type="evidence" value="ECO:0007669"/>
    <property type="project" value="UniProtKB-SubCell"/>
</dbReference>
<dbReference type="GO" id="GO:0048001">
    <property type="term" value="F:erythrose-4-phosphate dehydrogenase activity"/>
    <property type="evidence" value="ECO:0007669"/>
    <property type="project" value="UniProtKB-UniRule"/>
</dbReference>
<dbReference type="GO" id="GO:0051287">
    <property type="term" value="F:NAD binding"/>
    <property type="evidence" value="ECO:0007669"/>
    <property type="project" value="InterPro"/>
</dbReference>
<dbReference type="GO" id="GO:0042823">
    <property type="term" value="P:pyridoxal phosphate biosynthetic process"/>
    <property type="evidence" value="ECO:0007669"/>
    <property type="project" value="UniProtKB-UniRule"/>
</dbReference>
<dbReference type="GO" id="GO:0008615">
    <property type="term" value="P:pyridoxine biosynthetic process"/>
    <property type="evidence" value="ECO:0007669"/>
    <property type="project" value="UniProtKB-UniRule"/>
</dbReference>
<dbReference type="CDD" id="cd23937">
    <property type="entry name" value="GAPDH_C_E4PDH"/>
    <property type="match status" value="1"/>
</dbReference>
<dbReference type="CDD" id="cd17892">
    <property type="entry name" value="GAPDH_N_E4PDH"/>
    <property type="match status" value="1"/>
</dbReference>
<dbReference type="FunFam" id="3.30.360.10:FF:000007">
    <property type="entry name" value="D-erythrose-4-phosphate dehydrogenase"/>
    <property type="match status" value="1"/>
</dbReference>
<dbReference type="FunFam" id="3.40.50.720:FF:000001">
    <property type="entry name" value="Glyceraldehyde-3-phosphate dehydrogenase"/>
    <property type="match status" value="1"/>
</dbReference>
<dbReference type="Gene3D" id="3.30.360.10">
    <property type="entry name" value="Dihydrodipicolinate Reductase, domain 2"/>
    <property type="match status" value="1"/>
</dbReference>
<dbReference type="Gene3D" id="3.40.50.720">
    <property type="entry name" value="NAD(P)-binding Rossmann-like Domain"/>
    <property type="match status" value="1"/>
</dbReference>
<dbReference type="HAMAP" id="MF_01640">
    <property type="entry name" value="E4P_dehydrog"/>
    <property type="match status" value="1"/>
</dbReference>
<dbReference type="InterPro" id="IPR006422">
    <property type="entry name" value="E4P_DH_bac"/>
</dbReference>
<dbReference type="InterPro" id="IPR020831">
    <property type="entry name" value="GlycerAld/Erythrose_P_DH"/>
</dbReference>
<dbReference type="InterPro" id="IPR020829">
    <property type="entry name" value="GlycerAld_3-P_DH_cat"/>
</dbReference>
<dbReference type="InterPro" id="IPR020828">
    <property type="entry name" value="GlycerAld_3-P_DH_NAD(P)-bd"/>
</dbReference>
<dbReference type="InterPro" id="IPR036291">
    <property type="entry name" value="NAD(P)-bd_dom_sf"/>
</dbReference>
<dbReference type="NCBIfam" id="TIGR01532">
    <property type="entry name" value="E4PD_g-proteo"/>
    <property type="match status" value="1"/>
</dbReference>
<dbReference type="NCBIfam" id="NF010058">
    <property type="entry name" value="PRK13535.1"/>
    <property type="match status" value="1"/>
</dbReference>
<dbReference type="PANTHER" id="PTHR43148">
    <property type="entry name" value="GLYCERALDEHYDE-3-PHOSPHATE DEHYDROGENASE 2"/>
    <property type="match status" value="1"/>
</dbReference>
<dbReference type="Pfam" id="PF02800">
    <property type="entry name" value="Gp_dh_C"/>
    <property type="match status" value="1"/>
</dbReference>
<dbReference type="Pfam" id="PF00044">
    <property type="entry name" value="Gp_dh_N"/>
    <property type="match status" value="1"/>
</dbReference>
<dbReference type="PIRSF" id="PIRSF000149">
    <property type="entry name" value="GAP_DH"/>
    <property type="match status" value="1"/>
</dbReference>
<dbReference type="PRINTS" id="PR00078">
    <property type="entry name" value="G3PDHDRGNASE"/>
</dbReference>
<dbReference type="SMART" id="SM00846">
    <property type="entry name" value="Gp_dh_N"/>
    <property type="match status" value="1"/>
</dbReference>
<dbReference type="SUPFAM" id="SSF55347">
    <property type="entry name" value="Glyceraldehyde-3-phosphate dehydrogenase-like, C-terminal domain"/>
    <property type="match status" value="1"/>
</dbReference>
<dbReference type="SUPFAM" id="SSF51735">
    <property type="entry name" value="NAD(P)-binding Rossmann-fold domains"/>
    <property type="match status" value="1"/>
</dbReference>